<keyword id="KW-0496">Mitochondrion</keyword>
<keyword id="KW-1185">Reference proteome</keyword>
<keyword id="KW-0809">Transit peptide</keyword>
<name>AIM9_PICGU</name>
<organism>
    <name type="scientific">Meyerozyma guilliermondii (strain ATCC 6260 / CBS 566 / DSM 6381 / JCM 1539 / NBRC 10279 / NRRL Y-324)</name>
    <name type="common">Yeast</name>
    <name type="synonym">Candida guilliermondii</name>
    <dbReference type="NCBI Taxonomy" id="294746"/>
    <lineage>
        <taxon>Eukaryota</taxon>
        <taxon>Fungi</taxon>
        <taxon>Dikarya</taxon>
        <taxon>Ascomycota</taxon>
        <taxon>Saccharomycotina</taxon>
        <taxon>Pichiomycetes</taxon>
        <taxon>Debaryomycetaceae</taxon>
        <taxon>Meyerozyma</taxon>
    </lineage>
</organism>
<sequence length="609" mass="69982">MSIIQARCIGNLTRRSIVNVMSRRFQSLGPNPQEVYTKISDTKDPKRDKFFQYSWGSWLKDNEKQRAKRTTRFSIEGATKLIANLIKEKSDGTVKSPISKNGSSILSHNILSKTIGNDTNVTIKSISSIHEGKHHRVYKISLSSDKQLVLRLPYRLESDVAISQKIKSEVATMDFLDLKLKLNVPKVLAYGPDRSNDLEHPFILMEYIEGDLLMKQWEPMSKDEETVKSVITPIADFHSKVISVEFNKFGSLYFDKDVASEHRLDAAYEGEENESLSGRWRIGPSVEKPFSKRKNKLSAKTVAQHNGPWKADEPLQLITSVTEIELENLKNRLALSQADAGSDLENQENLKKQITTFEHLKVMGPKLLNPKSKSIMNAEELFKPRLYVPDLDPMNAIINVNRDNEPYFLDFEYSTIKPFILSNYPPFVAYHGAKVYDLENDIPGYADMDEVEKQQYEFMFYKTRNERIWENDLNSRRHDLIAVASPHIKVLRSPYTQVLEYRNDQDYLYVEACIVQLQAMWEAYVANELCNSSDAKFPIEYSKEYLDKHTQALNQYQADIVSTPFAATDGWVPQDMFDQLLEQGILVEENGEYKVATEKVLKPEEGETQ</sequence>
<feature type="transit peptide" description="Mitochondrion" evidence="2">
    <location>
        <begin position="1"/>
        <end position="24"/>
    </location>
</feature>
<feature type="chain" id="PRO_0000408726" description="Altered inheritance of mitochondria protein 9, mitochondrial">
    <location>
        <begin position="25"/>
        <end position="609"/>
    </location>
</feature>
<accession>A5DB88</accession>
<reference key="1">
    <citation type="journal article" date="2009" name="Nature">
        <title>Evolution of pathogenicity and sexual reproduction in eight Candida genomes.</title>
        <authorList>
            <person name="Butler G."/>
            <person name="Rasmussen M.D."/>
            <person name="Lin M.F."/>
            <person name="Santos M.A.S."/>
            <person name="Sakthikumar S."/>
            <person name="Munro C.A."/>
            <person name="Rheinbay E."/>
            <person name="Grabherr M."/>
            <person name="Forche A."/>
            <person name="Reedy J.L."/>
            <person name="Agrafioti I."/>
            <person name="Arnaud M.B."/>
            <person name="Bates S."/>
            <person name="Brown A.J.P."/>
            <person name="Brunke S."/>
            <person name="Costanzo M.C."/>
            <person name="Fitzpatrick D.A."/>
            <person name="de Groot P.W.J."/>
            <person name="Harris D."/>
            <person name="Hoyer L.L."/>
            <person name="Hube B."/>
            <person name="Klis F.M."/>
            <person name="Kodira C."/>
            <person name="Lennard N."/>
            <person name="Logue M.E."/>
            <person name="Martin R."/>
            <person name="Neiman A.M."/>
            <person name="Nikolaou E."/>
            <person name="Quail M.A."/>
            <person name="Quinn J."/>
            <person name="Santos M.C."/>
            <person name="Schmitzberger F.F."/>
            <person name="Sherlock G."/>
            <person name="Shah P."/>
            <person name="Silverstein K.A.T."/>
            <person name="Skrzypek M.S."/>
            <person name="Soll D."/>
            <person name="Staggs R."/>
            <person name="Stansfield I."/>
            <person name="Stumpf M.P.H."/>
            <person name="Sudbery P.E."/>
            <person name="Srikantha T."/>
            <person name="Zeng Q."/>
            <person name="Berman J."/>
            <person name="Berriman M."/>
            <person name="Heitman J."/>
            <person name="Gow N.A.R."/>
            <person name="Lorenz M.C."/>
            <person name="Birren B.W."/>
            <person name="Kellis M."/>
            <person name="Cuomo C.A."/>
        </authorList>
    </citation>
    <scope>NUCLEOTIDE SEQUENCE [LARGE SCALE GENOMIC DNA]</scope>
    <source>
        <strain>ATCC 6260 / CBS 566 / DSM 6381 / JCM 1539 / NBRC 10279 / NRRL Y-324</strain>
    </source>
</reference>
<gene>
    <name type="primary">AIM9</name>
    <name type="synonym">FMP29</name>
    <name type="ORF">PGUG_00543</name>
</gene>
<protein>
    <recommendedName>
        <fullName>Altered inheritance of mitochondria protein 9, mitochondrial</fullName>
    </recommendedName>
    <alternativeName>
        <fullName>Found in mitochondrial proteome protein 29</fullName>
    </alternativeName>
</protein>
<evidence type="ECO:0000250" key="1"/>
<evidence type="ECO:0000255" key="2"/>
<evidence type="ECO:0000305" key="3"/>
<comment type="subcellular location">
    <subcellularLocation>
        <location evidence="1">Mitochondrion</location>
    </subcellularLocation>
</comment>
<comment type="similarity">
    <text evidence="3">Belongs to the AIM9 family.</text>
</comment>
<proteinExistence type="inferred from homology"/>
<dbReference type="EMBL" id="CH408155">
    <property type="protein sequence ID" value="EDK36445.2"/>
    <property type="molecule type" value="Genomic_DNA"/>
</dbReference>
<dbReference type="RefSeq" id="XP_001487166.1">
    <property type="nucleotide sequence ID" value="XM_001487116.1"/>
</dbReference>
<dbReference type="FunCoup" id="A5DB88">
    <property type="interactions" value="24"/>
</dbReference>
<dbReference type="STRING" id="294746.A5DB88"/>
<dbReference type="GeneID" id="5128933"/>
<dbReference type="KEGG" id="pgu:PGUG_00543"/>
<dbReference type="VEuPathDB" id="FungiDB:PGUG_00543"/>
<dbReference type="eggNOG" id="ENOG502QV1E">
    <property type="taxonomic scope" value="Eukaryota"/>
</dbReference>
<dbReference type="HOGENOM" id="CLU_019189_0_1_1"/>
<dbReference type="InParanoid" id="A5DB88"/>
<dbReference type="OMA" id="GWIPQDM"/>
<dbReference type="OrthoDB" id="2968323at2759"/>
<dbReference type="Proteomes" id="UP000001997">
    <property type="component" value="Unassembled WGS sequence"/>
</dbReference>
<dbReference type="GO" id="GO:0005739">
    <property type="term" value="C:mitochondrion"/>
    <property type="evidence" value="ECO:0007669"/>
    <property type="project" value="UniProtKB-SubCell"/>
</dbReference>
<dbReference type="Gene3D" id="3.30.200.20">
    <property type="entry name" value="Phosphorylase Kinase, domain 1"/>
    <property type="match status" value="1"/>
</dbReference>
<dbReference type="InterPro" id="IPR002575">
    <property type="entry name" value="Aminoglycoside_PTrfase"/>
</dbReference>
<dbReference type="InterPro" id="IPR011009">
    <property type="entry name" value="Kinase-like_dom_sf"/>
</dbReference>
<dbReference type="InterPro" id="IPR051035">
    <property type="entry name" value="Mito_inheritance_9"/>
</dbReference>
<dbReference type="PANTHER" id="PTHR36091">
    <property type="entry name" value="ALTERED INHERITANCE OF MITOCHONDRIA PROTEIN 9, MITOCHONDRIAL"/>
    <property type="match status" value="1"/>
</dbReference>
<dbReference type="PANTHER" id="PTHR36091:SF1">
    <property type="entry name" value="ALTERED INHERITANCE OF MITOCHONDRIA PROTEIN 9, MITOCHONDRIAL"/>
    <property type="match status" value="1"/>
</dbReference>
<dbReference type="Pfam" id="PF01636">
    <property type="entry name" value="APH"/>
    <property type="match status" value="1"/>
</dbReference>
<dbReference type="SUPFAM" id="SSF56112">
    <property type="entry name" value="Protein kinase-like (PK-like)"/>
    <property type="match status" value="1"/>
</dbReference>